<sequence length="117" mass="13135">MHVSNFTAGLLLLVIAFGGTSIILKHKVERLETSVTEITKTANENALALNNLRIQYNYIDAMNNKNREAIAAIERENEKLRKDAKKADVVAHKPGLVEKQINNSFNKFAEDIQDLSK</sequence>
<organism>
    <name type="scientific">Enterobacteria phage T4</name>
    <name type="common">Bacteriophage T4</name>
    <dbReference type="NCBI Taxonomy" id="10665"/>
    <lineage>
        <taxon>Viruses</taxon>
        <taxon>Duplodnaviria</taxon>
        <taxon>Heunggongvirae</taxon>
        <taxon>Uroviricota</taxon>
        <taxon>Caudoviricetes</taxon>
        <taxon>Straboviridae</taxon>
        <taxon>Tevenvirinae</taxon>
        <taxon>Tequatrovirus</taxon>
    </lineage>
</organism>
<accession>P39504</accession>
<dbReference type="EMBL" id="AF158101">
    <property type="protein sequence ID" value="AAD42645.1"/>
    <property type="molecule type" value="Genomic_DNA"/>
</dbReference>
<dbReference type="RefSeq" id="NP_049837.1">
    <property type="nucleotide sequence ID" value="NC_000866.4"/>
</dbReference>
<dbReference type="SMR" id="P39504"/>
<dbReference type="TCDB" id="1.M.1.5.1">
    <property type="family name" value="the rz/rz1 spanin1 (rz(1)) family"/>
</dbReference>
<dbReference type="GeneID" id="1258652"/>
<dbReference type="KEGG" id="vg:1258652"/>
<dbReference type="OrthoDB" id="18018at10239"/>
<dbReference type="Proteomes" id="UP000009087">
    <property type="component" value="Segment"/>
</dbReference>
<dbReference type="GO" id="GO:0020002">
    <property type="term" value="C:host cell plasma membrane"/>
    <property type="evidence" value="ECO:0007669"/>
    <property type="project" value="UniProtKB-SubCell"/>
</dbReference>
<dbReference type="GO" id="GO:0016020">
    <property type="term" value="C:membrane"/>
    <property type="evidence" value="ECO:0007669"/>
    <property type="project" value="UniProtKB-KW"/>
</dbReference>
<dbReference type="GO" id="GO:0044659">
    <property type="term" value="P:viral release from host cell by cytolysis"/>
    <property type="evidence" value="ECO:0000316"/>
    <property type="project" value="CACAO"/>
</dbReference>
<organismHost>
    <name type="scientific">Escherichia coli</name>
    <dbReference type="NCBI Taxonomy" id="562"/>
</organismHost>
<gene>
    <name type="primary">y13K</name>
    <name type="synonym">pseT.3</name>
</gene>
<name>SPAN1_BPT4</name>
<protein>
    <recommendedName>
        <fullName>Spanin, inner membrane subunit</fullName>
        <shortName>i-spanin</shortName>
    </recommendedName>
</protein>
<comment type="function">
    <text evidence="1 3">Component of the spanin complex that disrupts the host outer membrane and participates in cell lysis during virus exit. The spanin complex conducts the final step in host lysis by disrupting the outer membrane after holin and endolysin action have permeabilized the inner membrane and degraded the host peptidoglycans. Host outer membrane disruption is possibly due to local fusion between the inner and outer membrane performed by the spanin complex (By similarity).</text>
</comment>
<comment type="subunit">
    <text>Interacts (via C-terminus) with the spanin outer lipoprotein subunit (via C-terminus). Part of the spanin complex which spans the entire periplasmic space. The spanin complex is composed of spanin inner membrane subunit and spanin outer membrane subunit.</text>
</comment>
<comment type="subcellular location">
    <subcellularLocation>
        <location evidence="1">Host cell inner membrane</location>
        <topology evidence="1">Single-pass type II membrane protein</topology>
        <orientation evidence="1">Periplasmic side</orientation>
    </subcellularLocation>
</comment>
<feature type="chain" id="PRO_0000165184" description="Spanin, inner membrane subunit">
    <location>
        <begin position="1"/>
        <end position="117"/>
    </location>
</feature>
<feature type="topological domain" description="Cytoplasmic" evidence="2">
    <location>
        <begin position="1"/>
        <end position="2"/>
    </location>
</feature>
<feature type="transmembrane region" description="Helical; Signal-anchor for type II membrane protein" evidence="2">
    <location>
        <begin position="3"/>
        <end position="23"/>
    </location>
</feature>
<feature type="topological domain" description="Periplasmic" evidence="2">
    <location>
        <begin position="24"/>
        <end position="117"/>
    </location>
</feature>
<feature type="coiled-coil region" evidence="2">
    <location>
        <begin position="24"/>
        <end position="93"/>
    </location>
</feature>
<reference key="1">
    <citation type="journal article" date="2003" name="Microbiol. Mol. Biol. Rev.">
        <title>Bacteriophage T4 genome.</title>
        <authorList>
            <person name="Miller E.S."/>
            <person name="Kutter E."/>
            <person name="Mosig G."/>
            <person name="Arisaka F."/>
            <person name="Kunisawa T."/>
            <person name="Ruger W."/>
        </authorList>
    </citation>
    <scope>NUCLEOTIDE SEQUENCE [LARGE SCALE GENOMIC DNA]</scope>
</reference>
<reference key="2">
    <citation type="journal article" date="2007" name="J. Mol. Biol.">
        <title>Rz/Rz1 lysis gene equivalents in phages of Gram-negative hosts.</title>
        <authorList>
            <person name="Summer E.J."/>
            <person name="Berry J."/>
            <person name="Tran T.A."/>
            <person name="Niu L."/>
            <person name="Struck D.K."/>
            <person name="Young R."/>
        </authorList>
    </citation>
    <scope>FUNCTION</scope>
</reference>
<proteinExistence type="inferred from homology"/>
<keyword id="KW-0175">Coiled coil</keyword>
<keyword id="KW-0204">Cytolysis</keyword>
<keyword id="KW-1030">Host cell inner membrane</keyword>
<keyword id="KW-0578">Host cell lysis by virus</keyword>
<keyword id="KW-1032">Host cell membrane</keyword>
<keyword id="KW-1043">Host membrane</keyword>
<keyword id="KW-0472">Membrane</keyword>
<keyword id="KW-1185">Reference proteome</keyword>
<keyword id="KW-0735">Signal-anchor</keyword>
<keyword id="KW-0812">Transmembrane</keyword>
<keyword id="KW-1133">Transmembrane helix</keyword>
<keyword id="KW-1188">Viral release from host cell</keyword>
<evidence type="ECO:0000250" key="1"/>
<evidence type="ECO:0000255" key="2"/>
<evidence type="ECO:0000269" key="3">
    <source>
    </source>
</evidence>